<dbReference type="EMBL" id="CP000510">
    <property type="protein sequence ID" value="ABM04982.1"/>
    <property type="molecule type" value="Genomic_DNA"/>
</dbReference>
<dbReference type="RefSeq" id="WP_011771534.1">
    <property type="nucleotide sequence ID" value="NC_008709.1"/>
</dbReference>
<dbReference type="SMR" id="A1SZR7"/>
<dbReference type="STRING" id="357804.Ping_3295"/>
<dbReference type="KEGG" id="pin:Ping_3295"/>
<dbReference type="eggNOG" id="COG1781">
    <property type="taxonomic scope" value="Bacteria"/>
</dbReference>
<dbReference type="HOGENOM" id="CLU_128576_0_0_6"/>
<dbReference type="OrthoDB" id="5599321at2"/>
<dbReference type="Proteomes" id="UP000000639">
    <property type="component" value="Chromosome"/>
</dbReference>
<dbReference type="GO" id="GO:0009347">
    <property type="term" value="C:aspartate carbamoyltransferase complex"/>
    <property type="evidence" value="ECO:0007669"/>
    <property type="project" value="InterPro"/>
</dbReference>
<dbReference type="GO" id="GO:0046872">
    <property type="term" value="F:metal ion binding"/>
    <property type="evidence" value="ECO:0007669"/>
    <property type="project" value="UniProtKB-KW"/>
</dbReference>
<dbReference type="GO" id="GO:0006207">
    <property type="term" value="P:'de novo' pyrimidine nucleobase biosynthetic process"/>
    <property type="evidence" value="ECO:0007669"/>
    <property type="project" value="InterPro"/>
</dbReference>
<dbReference type="GO" id="GO:0006221">
    <property type="term" value="P:pyrimidine nucleotide biosynthetic process"/>
    <property type="evidence" value="ECO:0007669"/>
    <property type="project" value="UniProtKB-UniRule"/>
</dbReference>
<dbReference type="Gene3D" id="2.30.30.20">
    <property type="entry name" value="Aspartate carbamoyltransferase regulatory subunit, C-terminal domain"/>
    <property type="match status" value="1"/>
</dbReference>
<dbReference type="Gene3D" id="3.30.70.140">
    <property type="entry name" value="Aspartate carbamoyltransferase regulatory subunit, N-terminal domain"/>
    <property type="match status" value="1"/>
</dbReference>
<dbReference type="HAMAP" id="MF_00002">
    <property type="entry name" value="Asp_carb_tr_reg"/>
    <property type="match status" value="1"/>
</dbReference>
<dbReference type="InterPro" id="IPR020545">
    <property type="entry name" value="Asp_carbamoyltransf_reg_N"/>
</dbReference>
<dbReference type="InterPro" id="IPR002801">
    <property type="entry name" value="Asp_carbamoylTrfase_reg"/>
</dbReference>
<dbReference type="InterPro" id="IPR020542">
    <property type="entry name" value="Asp_carbamoyltrfase_reg_C"/>
</dbReference>
<dbReference type="InterPro" id="IPR036792">
    <property type="entry name" value="Asp_carbatrfase_reg_C_sf"/>
</dbReference>
<dbReference type="InterPro" id="IPR036793">
    <property type="entry name" value="Asp_carbatrfase_reg_N_sf"/>
</dbReference>
<dbReference type="NCBIfam" id="TIGR00240">
    <property type="entry name" value="ATCase_reg"/>
    <property type="match status" value="1"/>
</dbReference>
<dbReference type="PANTHER" id="PTHR35805">
    <property type="entry name" value="ASPARTATE CARBAMOYLTRANSFERASE REGULATORY CHAIN"/>
    <property type="match status" value="1"/>
</dbReference>
<dbReference type="PANTHER" id="PTHR35805:SF1">
    <property type="entry name" value="ASPARTATE CARBAMOYLTRANSFERASE REGULATORY CHAIN"/>
    <property type="match status" value="1"/>
</dbReference>
<dbReference type="Pfam" id="PF01948">
    <property type="entry name" value="PyrI"/>
    <property type="match status" value="1"/>
</dbReference>
<dbReference type="Pfam" id="PF02748">
    <property type="entry name" value="PyrI_C"/>
    <property type="match status" value="1"/>
</dbReference>
<dbReference type="SUPFAM" id="SSF57825">
    <property type="entry name" value="Aspartate carbamoyltransferase, Regulatory-chain, C-terminal domain"/>
    <property type="match status" value="1"/>
</dbReference>
<dbReference type="SUPFAM" id="SSF54893">
    <property type="entry name" value="Aspartate carbamoyltransferase, Regulatory-chain, N-terminal domain"/>
    <property type="match status" value="1"/>
</dbReference>
<evidence type="ECO:0000255" key="1">
    <source>
        <dbReference type="HAMAP-Rule" id="MF_00002"/>
    </source>
</evidence>
<reference key="1">
    <citation type="journal article" date="2008" name="BMC Genomics">
        <title>Genomics of an extreme psychrophile, Psychromonas ingrahamii.</title>
        <authorList>
            <person name="Riley M."/>
            <person name="Staley J.T."/>
            <person name="Danchin A."/>
            <person name="Wang T.Z."/>
            <person name="Brettin T.S."/>
            <person name="Hauser L.J."/>
            <person name="Land M.L."/>
            <person name="Thompson L.S."/>
        </authorList>
    </citation>
    <scope>NUCLEOTIDE SEQUENCE [LARGE SCALE GENOMIC DNA]</scope>
    <source>
        <strain>DSM 17664 / CCUG 51855 / 37</strain>
    </source>
</reference>
<protein>
    <recommendedName>
        <fullName evidence="1">Aspartate carbamoyltransferase regulatory chain</fullName>
    </recommendedName>
</protein>
<keyword id="KW-0479">Metal-binding</keyword>
<keyword id="KW-0665">Pyrimidine biosynthesis</keyword>
<keyword id="KW-1185">Reference proteome</keyword>
<keyword id="KW-0862">Zinc</keyword>
<gene>
    <name evidence="1" type="primary">pyrI</name>
    <name type="ordered locus">Ping_3295</name>
</gene>
<sequence length="151" mass="17336">MQKKLQVEAIEHGSVIDHIPVQQGVKIIRFFNLTQTNEKITIGLNLATHTGQKKDLIKVENTFISDKQANQLALFAPHATINQIKDFKVVNKFQVQLPDSFIDVLACPNSNCISHHEPVDTRFYVKKKSTLKLKCHYCEKTFDHLFFSELD</sequence>
<feature type="chain" id="PRO_0000321497" description="Aspartate carbamoyltransferase regulatory chain">
    <location>
        <begin position="1"/>
        <end position="151"/>
    </location>
</feature>
<feature type="binding site" evidence="1">
    <location>
        <position position="107"/>
    </location>
    <ligand>
        <name>Zn(2+)</name>
        <dbReference type="ChEBI" id="CHEBI:29105"/>
    </ligand>
</feature>
<feature type="binding site" evidence="1">
    <location>
        <position position="112"/>
    </location>
    <ligand>
        <name>Zn(2+)</name>
        <dbReference type="ChEBI" id="CHEBI:29105"/>
    </ligand>
</feature>
<feature type="binding site" evidence="1">
    <location>
        <position position="135"/>
    </location>
    <ligand>
        <name>Zn(2+)</name>
        <dbReference type="ChEBI" id="CHEBI:29105"/>
    </ligand>
</feature>
<feature type="binding site" evidence="1">
    <location>
        <position position="138"/>
    </location>
    <ligand>
        <name>Zn(2+)</name>
        <dbReference type="ChEBI" id="CHEBI:29105"/>
    </ligand>
</feature>
<accession>A1SZR7</accession>
<name>PYRI_PSYIN</name>
<proteinExistence type="inferred from homology"/>
<comment type="function">
    <text evidence="1">Involved in allosteric regulation of aspartate carbamoyltransferase.</text>
</comment>
<comment type="cofactor">
    <cofactor evidence="1">
        <name>Zn(2+)</name>
        <dbReference type="ChEBI" id="CHEBI:29105"/>
    </cofactor>
    <text evidence="1">Binds 1 zinc ion per subunit.</text>
</comment>
<comment type="subunit">
    <text evidence="1">Contains catalytic and regulatory chains.</text>
</comment>
<comment type="similarity">
    <text evidence="1">Belongs to the PyrI family.</text>
</comment>
<organism>
    <name type="scientific">Psychromonas ingrahamii (strain DSM 17664 / CCUG 51855 / 37)</name>
    <dbReference type="NCBI Taxonomy" id="357804"/>
    <lineage>
        <taxon>Bacteria</taxon>
        <taxon>Pseudomonadati</taxon>
        <taxon>Pseudomonadota</taxon>
        <taxon>Gammaproteobacteria</taxon>
        <taxon>Alteromonadales</taxon>
        <taxon>Psychromonadaceae</taxon>
        <taxon>Psychromonas</taxon>
    </lineage>
</organism>